<feature type="chain" id="PRO_1000004924" description="Peptide chain release factor 1">
    <location>
        <begin position="1"/>
        <end position="357"/>
    </location>
</feature>
<feature type="region of interest" description="Disordered" evidence="2">
    <location>
        <begin position="282"/>
        <end position="308"/>
    </location>
</feature>
<feature type="compositionally biased region" description="Basic and acidic residues" evidence="2">
    <location>
        <begin position="282"/>
        <end position="294"/>
    </location>
</feature>
<feature type="modified residue" description="N5-methylglutamine" evidence="1">
    <location>
        <position position="235"/>
    </location>
</feature>
<proteinExistence type="inferred from homology"/>
<comment type="function">
    <text evidence="1">Peptide chain release factor 1 directs the termination of translation in response to the peptide chain termination codons UAG and UAA.</text>
</comment>
<comment type="subcellular location">
    <subcellularLocation>
        <location evidence="1">Cytoplasm</location>
    </subcellularLocation>
</comment>
<comment type="PTM">
    <text evidence="1">Methylated by PrmC. Methylation increases the termination efficiency of RF1.</text>
</comment>
<comment type="similarity">
    <text evidence="1">Belongs to the prokaryotic/mitochondrial release factor family.</text>
</comment>
<gene>
    <name evidence="1" type="primary">prfA</name>
    <name type="ordered locus">Oant_1036</name>
</gene>
<sequence>MIALPQDRMDQLLKRFSMIESQMANNPDSETYVKLASEYSELQEVVGKIRELTDSRKEAVDLAAMRDDASTDAEMRALALEELPGVEKRIEGLEQEVQILLLPKDAADEKNAILEIRAGTGGLEAALFAGDLFRMYERYAAEKGWRVELVSASEGDAGGYKEIIATVSGKGVFSKLKFESGVHRVQRVPETEAGGRIHTSAATVAVLPEAEDIDIEIRNEDIRIDTMRASGAGGQHVNTTDSAVRITHIPTGIMVVQAEKSQHQNRARAMQILRARLYDMERQKADTERSESRRSQVGSGDRSERIRTYNFPQGRVTDHRINLTLYKLDRVMEGDLDELVDALISDHQTALLTELGH</sequence>
<name>RF1_BRUA4</name>
<organism>
    <name type="scientific">Brucella anthropi (strain ATCC 49188 / DSM 6882 / CCUG 24695 / JCM 21032 / LMG 3331 / NBRC 15819 / NCTC 12168 / Alc 37)</name>
    <name type="common">Ochrobactrum anthropi</name>
    <dbReference type="NCBI Taxonomy" id="439375"/>
    <lineage>
        <taxon>Bacteria</taxon>
        <taxon>Pseudomonadati</taxon>
        <taxon>Pseudomonadota</taxon>
        <taxon>Alphaproteobacteria</taxon>
        <taxon>Hyphomicrobiales</taxon>
        <taxon>Brucellaceae</taxon>
        <taxon>Brucella/Ochrobactrum group</taxon>
        <taxon>Brucella</taxon>
    </lineage>
</organism>
<accession>A6WXQ3</accession>
<reference key="1">
    <citation type="journal article" date="2011" name="J. Bacteriol.">
        <title>Genome of Ochrobactrum anthropi ATCC 49188 T, a versatile opportunistic pathogen and symbiont of several eukaryotic hosts.</title>
        <authorList>
            <person name="Chain P.S."/>
            <person name="Lang D.M."/>
            <person name="Comerci D.J."/>
            <person name="Malfatti S.A."/>
            <person name="Vergez L.M."/>
            <person name="Shin M."/>
            <person name="Ugalde R.A."/>
            <person name="Garcia E."/>
            <person name="Tolmasky M.E."/>
        </authorList>
    </citation>
    <scope>NUCLEOTIDE SEQUENCE [LARGE SCALE GENOMIC DNA]</scope>
    <source>
        <strain>ATCC 49188 / DSM 6882 / CCUG 24695 / JCM 21032 / LMG 3331 / NBRC 15819 / NCTC 12168 / Alc 37</strain>
    </source>
</reference>
<keyword id="KW-0963">Cytoplasm</keyword>
<keyword id="KW-0488">Methylation</keyword>
<keyword id="KW-0648">Protein biosynthesis</keyword>
<keyword id="KW-1185">Reference proteome</keyword>
<dbReference type="EMBL" id="CP000758">
    <property type="protein sequence ID" value="ABS13757.1"/>
    <property type="molecule type" value="Genomic_DNA"/>
</dbReference>
<dbReference type="RefSeq" id="WP_012091207.1">
    <property type="nucleotide sequence ID" value="NC_009667.1"/>
</dbReference>
<dbReference type="SMR" id="A6WXQ3"/>
<dbReference type="STRING" id="439375.Oant_1036"/>
<dbReference type="KEGG" id="oan:Oant_1036"/>
<dbReference type="PATRIC" id="fig|439375.7.peg.1086"/>
<dbReference type="eggNOG" id="COG0216">
    <property type="taxonomic scope" value="Bacteria"/>
</dbReference>
<dbReference type="HOGENOM" id="CLU_036856_0_1_5"/>
<dbReference type="PhylomeDB" id="A6WXQ3"/>
<dbReference type="Proteomes" id="UP000002301">
    <property type="component" value="Chromosome 1"/>
</dbReference>
<dbReference type="GO" id="GO:0005737">
    <property type="term" value="C:cytoplasm"/>
    <property type="evidence" value="ECO:0007669"/>
    <property type="project" value="UniProtKB-SubCell"/>
</dbReference>
<dbReference type="GO" id="GO:0016149">
    <property type="term" value="F:translation release factor activity, codon specific"/>
    <property type="evidence" value="ECO:0007669"/>
    <property type="project" value="UniProtKB-UniRule"/>
</dbReference>
<dbReference type="FunFam" id="3.30.160.20:FF:000004">
    <property type="entry name" value="Peptide chain release factor 1"/>
    <property type="match status" value="1"/>
</dbReference>
<dbReference type="FunFam" id="3.30.70.1660:FF:000002">
    <property type="entry name" value="Peptide chain release factor 1"/>
    <property type="match status" value="1"/>
</dbReference>
<dbReference type="FunFam" id="3.30.70.1660:FF:000004">
    <property type="entry name" value="Peptide chain release factor 1"/>
    <property type="match status" value="1"/>
</dbReference>
<dbReference type="Gene3D" id="3.30.160.20">
    <property type="match status" value="1"/>
</dbReference>
<dbReference type="Gene3D" id="3.30.70.1660">
    <property type="match status" value="1"/>
</dbReference>
<dbReference type="Gene3D" id="6.10.140.1950">
    <property type="match status" value="1"/>
</dbReference>
<dbReference type="HAMAP" id="MF_00093">
    <property type="entry name" value="Rel_fac_1"/>
    <property type="match status" value="1"/>
</dbReference>
<dbReference type="InterPro" id="IPR005139">
    <property type="entry name" value="PCRF"/>
</dbReference>
<dbReference type="InterPro" id="IPR000352">
    <property type="entry name" value="Pep_chain_release_fac_I"/>
</dbReference>
<dbReference type="InterPro" id="IPR045853">
    <property type="entry name" value="Pep_chain_release_fac_I_sf"/>
</dbReference>
<dbReference type="InterPro" id="IPR050057">
    <property type="entry name" value="Prokaryotic/Mito_RF"/>
</dbReference>
<dbReference type="InterPro" id="IPR004373">
    <property type="entry name" value="RF-1"/>
</dbReference>
<dbReference type="NCBIfam" id="TIGR00019">
    <property type="entry name" value="prfA"/>
    <property type="match status" value="1"/>
</dbReference>
<dbReference type="NCBIfam" id="NF001859">
    <property type="entry name" value="PRK00591.1"/>
    <property type="match status" value="1"/>
</dbReference>
<dbReference type="PANTHER" id="PTHR43804">
    <property type="entry name" value="LD18447P"/>
    <property type="match status" value="1"/>
</dbReference>
<dbReference type="PANTHER" id="PTHR43804:SF7">
    <property type="entry name" value="LD18447P"/>
    <property type="match status" value="1"/>
</dbReference>
<dbReference type="Pfam" id="PF03462">
    <property type="entry name" value="PCRF"/>
    <property type="match status" value="1"/>
</dbReference>
<dbReference type="Pfam" id="PF00472">
    <property type="entry name" value="RF-1"/>
    <property type="match status" value="1"/>
</dbReference>
<dbReference type="SMART" id="SM00937">
    <property type="entry name" value="PCRF"/>
    <property type="match status" value="1"/>
</dbReference>
<dbReference type="SUPFAM" id="SSF75620">
    <property type="entry name" value="Release factor"/>
    <property type="match status" value="1"/>
</dbReference>
<dbReference type="PROSITE" id="PS00745">
    <property type="entry name" value="RF_PROK_I"/>
    <property type="match status" value="1"/>
</dbReference>
<evidence type="ECO:0000255" key="1">
    <source>
        <dbReference type="HAMAP-Rule" id="MF_00093"/>
    </source>
</evidence>
<evidence type="ECO:0000256" key="2">
    <source>
        <dbReference type="SAM" id="MobiDB-lite"/>
    </source>
</evidence>
<protein>
    <recommendedName>
        <fullName evidence="1">Peptide chain release factor 1</fullName>
        <shortName evidence="1">RF-1</shortName>
    </recommendedName>
</protein>